<dbReference type="EMBL" id="CP000812">
    <property type="protein sequence ID" value="ABV33256.1"/>
    <property type="molecule type" value="Genomic_DNA"/>
</dbReference>
<dbReference type="SMR" id="A8F522"/>
<dbReference type="STRING" id="416591.Tlet_0690"/>
<dbReference type="KEGG" id="tle:Tlet_0690"/>
<dbReference type="eggNOG" id="COG0445">
    <property type="taxonomic scope" value="Bacteria"/>
</dbReference>
<dbReference type="HOGENOM" id="CLU_007831_2_2_0"/>
<dbReference type="Proteomes" id="UP000002016">
    <property type="component" value="Chromosome"/>
</dbReference>
<dbReference type="GO" id="GO:0005829">
    <property type="term" value="C:cytosol"/>
    <property type="evidence" value="ECO:0007669"/>
    <property type="project" value="TreeGrafter"/>
</dbReference>
<dbReference type="GO" id="GO:0050660">
    <property type="term" value="F:flavin adenine dinucleotide binding"/>
    <property type="evidence" value="ECO:0007669"/>
    <property type="project" value="UniProtKB-UniRule"/>
</dbReference>
<dbReference type="GO" id="GO:0030488">
    <property type="term" value="P:tRNA methylation"/>
    <property type="evidence" value="ECO:0007669"/>
    <property type="project" value="TreeGrafter"/>
</dbReference>
<dbReference type="GO" id="GO:0002098">
    <property type="term" value="P:tRNA wobble uridine modification"/>
    <property type="evidence" value="ECO:0007669"/>
    <property type="project" value="InterPro"/>
</dbReference>
<dbReference type="FunFam" id="3.50.50.60:FF:000002">
    <property type="entry name" value="tRNA uridine 5-carboxymethylaminomethyl modification enzyme MnmG"/>
    <property type="match status" value="1"/>
</dbReference>
<dbReference type="Gene3D" id="3.50.50.60">
    <property type="entry name" value="FAD/NAD(P)-binding domain"/>
    <property type="match status" value="2"/>
</dbReference>
<dbReference type="Gene3D" id="1.10.150.570">
    <property type="entry name" value="GidA associated domain, C-terminal subdomain"/>
    <property type="match status" value="1"/>
</dbReference>
<dbReference type="Gene3D" id="1.10.10.1800">
    <property type="entry name" value="tRNA uridine 5-carboxymethylaminomethyl modification enzyme MnmG/GidA"/>
    <property type="match status" value="1"/>
</dbReference>
<dbReference type="HAMAP" id="MF_00129">
    <property type="entry name" value="MnmG_GidA"/>
    <property type="match status" value="1"/>
</dbReference>
<dbReference type="InterPro" id="IPR036188">
    <property type="entry name" value="FAD/NAD-bd_sf"/>
</dbReference>
<dbReference type="InterPro" id="IPR049312">
    <property type="entry name" value="GIDA_C_N"/>
</dbReference>
<dbReference type="InterPro" id="IPR004416">
    <property type="entry name" value="MnmG"/>
</dbReference>
<dbReference type="InterPro" id="IPR002218">
    <property type="entry name" value="MnmG-rel"/>
</dbReference>
<dbReference type="InterPro" id="IPR020595">
    <property type="entry name" value="MnmG-rel_CS"/>
</dbReference>
<dbReference type="InterPro" id="IPR026904">
    <property type="entry name" value="MnmG_C"/>
</dbReference>
<dbReference type="InterPro" id="IPR047001">
    <property type="entry name" value="MnmG_C_subdom"/>
</dbReference>
<dbReference type="InterPro" id="IPR044920">
    <property type="entry name" value="MnmG_C_subdom_sf"/>
</dbReference>
<dbReference type="InterPro" id="IPR040131">
    <property type="entry name" value="MnmG_N"/>
</dbReference>
<dbReference type="NCBIfam" id="TIGR00136">
    <property type="entry name" value="mnmG_gidA"/>
    <property type="match status" value="1"/>
</dbReference>
<dbReference type="PANTHER" id="PTHR11806">
    <property type="entry name" value="GLUCOSE INHIBITED DIVISION PROTEIN A"/>
    <property type="match status" value="1"/>
</dbReference>
<dbReference type="PANTHER" id="PTHR11806:SF0">
    <property type="entry name" value="PROTEIN MTO1 HOMOLOG, MITOCHONDRIAL"/>
    <property type="match status" value="1"/>
</dbReference>
<dbReference type="Pfam" id="PF01134">
    <property type="entry name" value="GIDA"/>
    <property type="match status" value="1"/>
</dbReference>
<dbReference type="Pfam" id="PF21680">
    <property type="entry name" value="GIDA_C_1st"/>
    <property type="match status" value="1"/>
</dbReference>
<dbReference type="Pfam" id="PF13932">
    <property type="entry name" value="SAM_GIDA_C"/>
    <property type="match status" value="1"/>
</dbReference>
<dbReference type="SMART" id="SM01228">
    <property type="entry name" value="GIDA_assoc_3"/>
    <property type="match status" value="1"/>
</dbReference>
<dbReference type="SUPFAM" id="SSF51905">
    <property type="entry name" value="FAD/NAD(P)-binding domain"/>
    <property type="match status" value="1"/>
</dbReference>
<dbReference type="PROSITE" id="PS01280">
    <property type="entry name" value="GIDA_1"/>
    <property type="match status" value="1"/>
</dbReference>
<dbReference type="PROSITE" id="PS01281">
    <property type="entry name" value="GIDA_2"/>
    <property type="match status" value="1"/>
</dbReference>
<feature type="chain" id="PRO_0000345352" description="tRNA uridine 5-carboxymethylaminomethyl modification enzyme MnmG">
    <location>
        <begin position="1"/>
        <end position="605"/>
    </location>
</feature>
<feature type="binding site" evidence="1">
    <location>
        <position position="107"/>
    </location>
    <ligand>
        <name>FAD</name>
        <dbReference type="ChEBI" id="CHEBI:57692"/>
    </ligand>
</feature>
<feature type="binding site" evidence="1">
    <location>
        <position position="162"/>
    </location>
    <ligand>
        <name>FAD</name>
        <dbReference type="ChEBI" id="CHEBI:57692"/>
    </ligand>
</feature>
<feature type="binding site" evidence="1">
    <location>
        <begin position="257"/>
        <end position="271"/>
    </location>
    <ligand>
        <name>NAD(+)</name>
        <dbReference type="ChEBI" id="CHEBI:57540"/>
    </ligand>
</feature>
<feature type="binding site" evidence="1">
    <location>
        <position position="354"/>
    </location>
    <ligand>
        <name>FAD</name>
        <dbReference type="ChEBI" id="CHEBI:57692"/>
    </ligand>
</feature>
<organism>
    <name type="scientific">Pseudothermotoga lettingae (strain ATCC BAA-301 / DSM 14385 / NBRC 107922 / TMO)</name>
    <name type="common">Thermotoga lettingae</name>
    <dbReference type="NCBI Taxonomy" id="416591"/>
    <lineage>
        <taxon>Bacteria</taxon>
        <taxon>Thermotogati</taxon>
        <taxon>Thermotogota</taxon>
        <taxon>Thermotogae</taxon>
        <taxon>Thermotogales</taxon>
        <taxon>Thermotogaceae</taxon>
        <taxon>Pseudothermotoga</taxon>
    </lineage>
</organism>
<reference key="1">
    <citation type="submission" date="2007-08" db="EMBL/GenBank/DDBJ databases">
        <title>Complete sequence of Thermotoga lettingae TMO.</title>
        <authorList>
            <consortium name="US DOE Joint Genome Institute"/>
            <person name="Copeland A."/>
            <person name="Lucas S."/>
            <person name="Lapidus A."/>
            <person name="Barry K."/>
            <person name="Glavina del Rio T."/>
            <person name="Dalin E."/>
            <person name="Tice H."/>
            <person name="Pitluck S."/>
            <person name="Foster B."/>
            <person name="Bruce D."/>
            <person name="Schmutz J."/>
            <person name="Larimer F."/>
            <person name="Land M."/>
            <person name="Hauser L."/>
            <person name="Kyrpides N."/>
            <person name="Mikhailova N."/>
            <person name="Nelson K."/>
            <person name="Gogarten J.P."/>
            <person name="Noll K."/>
            <person name="Richardson P."/>
        </authorList>
    </citation>
    <scope>NUCLEOTIDE SEQUENCE [LARGE SCALE GENOMIC DNA]</scope>
    <source>
        <strain>ATCC BAA-301 / DSM 14385 / NBRC 107922 / TMO</strain>
    </source>
</reference>
<sequence length="605" mass="68315">MEAALATARLGFKTALLTSNLDRVAWAPCNPAIGGPAKGIIVREIDALGGEMAKVTDETMINVRMLNTSKGASVRALRAQIDKVSYSQKMKRILEETQNLYLRHSQVCDILVEKGKVKSVVDTLGIEYKSRAIILTAGTFLNGKIFIGHATFEAGRLGDFPSKGLTESLEKYGIRFQRFKTGTPARILGKSIDFSKMIRQDTSKEPLCFSYFDKPVILSKDYPCWLTYTNEKTHEIIRKNLRFSPLYGDVKLIVGKGPRYCPSIEDKVVKFPSKNMHQIFVEPEGKTTGEYYLNGLSTSLPYEVQLEMIRTIPGLENAHITRPAYAIEYDYADPTQLYHTLESKIVEGLFLAGQINGTSGYEEAAGQGLIAGINAALKLRGENQFTLDRSEAYIGVMIDDIVTKGVDEPYRILTSRAEFRLLLRHDNAHLRLSKKGYQIGLIPKWFYEEILTLESRIKTEIERLKQVSIKPTGQINDFLTSINTHPLRQPTTLFQILKRPDITYEQLRSLDPSPMDSPEVIEQIELTAKYEDYIEKMLEETKVFNDLEKITIPEAIDYGKIPNLSVVAREKLEKIRLRNVLQVSRVPGITPADILALITYLKSFK</sequence>
<name>MNMG_PSELT</name>
<proteinExistence type="inferred from homology"/>
<comment type="function">
    <text evidence="1">NAD-binding protein involved in the addition of a carboxymethylaminomethyl (cmnm) group at the wobble position (U34) of certain tRNAs, forming tRNA-cmnm(5)s(2)U34.</text>
</comment>
<comment type="cofactor">
    <cofactor evidence="1">
        <name>FAD</name>
        <dbReference type="ChEBI" id="CHEBI:57692"/>
    </cofactor>
</comment>
<comment type="subunit">
    <text evidence="1">Homodimer. Heterotetramer of two MnmE and two MnmG subunits.</text>
</comment>
<comment type="subcellular location">
    <subcellularLocation>
        <location evidence="1">Cytoplasm</location>
    </subcellularLocation>
</comment>
<comment type="similarity">
    <text evidence="1">Belongs to the MnmG family.</text>
</comment>
<gene>
    <name evidence="1" type="primary">mnmG</name>
    <name evidence="1" type="synonym">gidA</name>
    <name type="ordered locus">Tlet_0690</name>
</gene>
<keyword id="KW-0963">Cytoplasm</keyword>
<keyword id="KW-0274">FAD</keyword>
<keyword id="KW-0285">Flavoprotein</keyword>
<keyword id="KW-0520">NAD</keyword>
<keyword id="KW-1185">Reference proteome</keyword>
<keyword id="KW-0819">tRNA processing</keyword>
<accession>A8F522</accession>
<protein>
    <recommendedName>
        <fullName evidence="1">tRNA uridine 5-carboxymethylaminomethyl modification enzyme MnmG</fullName>
    </recommendedName>
    <alternativeName>
        <fullName evidence="1">Glucose-inhibited division protein A</fullName>
    </alternativeName>
</protein>
<evidence type="ECO:0000255" key="1">
    <source>
        <dbReference type="HAMAP-Rule" id="MF_00129"/>
    </source>
</evidence>